<protein>
    <recommendedName>
        <fullName evidence="2">Elongation factor Tu</fullName>
        <shortName evidence="2">EF-Tu</shortName>
        <ecNumber evidence="2">3.6.5.3</ecNumber>
    </recommendedName>
</protein>
<reference key="1">
    <citation type="journal article" date="2009" name="Stand. Genomic Sci.">
        <title>Complete genome sequence of Beutenbergia cavernae type strain (HKI 0122).</title>
        <authorList>
            <person name="Land M."/>
            <person name="Pukall R."/>
            <person name="Abt B."/>
            <person name="Goker M."/>
            <person name="Rohde M."/>
            <person name="Glavina Del Rio T."/>
            <person name="Tice H."/>
            <person name="Copeland A."/>
            <person name="Cheng J.F."/>
            <person name="Lucas S."/>
            <person name="Chen F."/>
            <person name="Nolan M."/>
            <person name="Bruce D."/>
            <person name="Goodwin L."/>
            <person name="Pitluck S."/>
            <person name="Ivanova N."/>
            <person name="Mavromatis K."/>
            <person name="Ovchinnikova G."/>
            <person name="Pati A."/>
            <person name="Chen A."/>
            <person name="Palaniappan K."/>
            <person name="Hauser L."/>
            <person name="Chang Y.J."/>
            <person name="Jefferies C.C."/>
            <person name="Saunders E."/>
            <person name="Brettin T."/>
            <person name="Detter J.C."/>
            <person name="Han C."/>
            <person name="Chain P."/>
            <person name="Bristow J."/>
            <person name="Eisen J.A."/>
            <person name="Markowitz V."/>
            <person name="Hugenholtz P."/>
            <person name="Kyrpides N.C."/>
            <person name="Klenk H.P."/>
            <person name="Lapidus A."/>
        </authorList>
    </citation>
    <scope>NUCLEOTIDE SEQUENCE [LARGE SCALE GENOMIC DNA]</scope>
    <source>
        <strain>ATCC BAA-8 / DSM 12333 / CCUG 43141 / JCM 11478 / NBRC 16432 / NCIMB 13614 / HKI 0122</strain>
    </source>
</reference>
<feature type="chain" id="PRO_1000203004" description="Elongation factor Tu">
    <location>
        <begin position="1"/>
        <end position="396"/>
    </location>
</feature>
<feature type="domain" description="tr-type G">
    <location>
        <begin position="10"/>
        <end position="206"/>
    </location>
</feature>
<feature type="region of interest" description="G1" evidence="1">
    <location>
        <begin position="19"/>
        <end position="26"/>
    </location>
</feature>
<feature type="region of interest" description="G2" evidence="1">
    <location>
        <begin position="62"/>
        <end position="66"/>
    </location>
</feature>
<feature type="region of interest" description="G3" evidence="1">
    <location>
        <begin position="83"/>
        <end position="86"/>
    </location>
</feature>
<feature type="region of interest" description="G4" evidence="1">
    <location>
        <begin position="138"/>
        <end position="141"/>
    </location>
</feature>
<feature type="region of interest" description="G5" evidence="1">
    <location>
        <begin position="176"/>
        <end position="178"/>
    </location>
</feature>
<feature type="binding site" evidence="2">
    <location>
        <begin position="19"/>
        <end position="26"/>
    </location>
    <ligand>
        <name>GTP</name>
        <dbReference type="ChEBI" id="CHEBI:37565"/>
    </ligand>
</feature>
<feature type="binding site" evidence="2">
    <location>
        <position position="26"/>
    </location>
    <ligand>
        <name>Mg(2+)</name>
        <dbReference type="ChEBI" id="CHEBI:18420"/>
    </ligand>
</feature>
<feature type="binding site" evidence="2">
    <location>
        <begin position="83"/>
        <end position="87"/>
    </location>
    <ligand>
        <name>GTP</name>
        <dbReference type="ChEBI" id="CHEBI:37565"/>
    </ligand>
</feature>
<feature type="binding site" evidence="2">
    <location>
        <begin position="138"/>
        <end position="141"/>
    </location>
    <ligand>
        <name>GTP</name>
        <dbReference type="ChEBI" id="CHEBI:37565"/>
    </ligand>
</feature>
<keyword id="KW-0963">Cytoplasm</keyword>
<keyword id="KW-0251">Elongation factor</keyword>
<keyword id="KW-0342">GTP-binding</keyword>
<keyword id="KW-0378">Hydrolase</keyword>
<keyword id="KW-0460">Magnesium</keyword>
<keyword id="KW-0479">Metal-binding</keyword>
<keyword id="KW-0547">Nucleotide-binding</keyword>
<keyword id="KW-0648">Protein biosynthesis</keyword>
<keyword id="KW-1185">Reference proteome</keyword>
<name>EFTU_BEUC1</name>
<proteinExistence type="inferred from homology"/>
<sequence>MAKAKFERTKPHVNIGTIGHVDHGKTTLTAAISKVLHDKYPDLNPFTPFDEIDKAPEEKQRGITINIAHVEYQTEKRHYAHVDAPGHADYIKNMITGAAQMDGAILVVAATDGPMAQTREHVLLARQVGVPYLLVALNKSDMVDDEEILELVEMEVRELLSSQGFDGDDAPVIRVSGLKALEGDPEWVKTVEELMDAVDESVPEPVRDMDKPFLMPIEDVFTITGRGTVVTGKVERGKLAINSEVEIVGIRPAQKTTVTGIEMFHKQMDEAWAGENCGLLLRGTKREDVERGQVVVKPGTNTPHTQFEAQVYILSKAEGGRDNPFYSNYRPQFYFRTTDVTGVITLPEGTQMVMPGDNTEMTVDLIQPIAMEEGLGFAIREGGRTIGSGKVTKILA</sequence>
<evidence type="ECO:0000250" key="1"/>
<evidence type="ECO:0000255" key="2">
    <source>
        <dbReference type="HAMAP-Rule" id="MF_00118"/>
    </source>
</evidence>
<gene>
    <name evidence="2" type="primary">tuf</name>
    <name type="ordered locus">Bcav_3145</name>
</gene>
<organism>
    <name type="scientific">Beutenbergia cavernae (strain ATCC BAA-8 / DSM 12333 / CCUG 43141 / JCM 11478 / NBRC 16432 / NCIMB 13614 / HKI 0122)</name>
    <dbReference type="NCBI Taxonomy" id="471853"/>
    <lineage>
        <taxon>Bacteria</taxon>
        <taxon>Bacillati</taxon>
        <taxon>Actinomycetota</taxon>
        <taxon>Actinomycetes</taxon>
        <taxon>Micrococcales</taxon>
        <taxon>Beutenbergiaceae</taxon>
        <taxon>Beutenbergia</taxon>
    </lineage>
</organism>
<dbReference type="EC" id="3.6.5.3" evidence="2"/>
<dbReference type="EMBL" id="CP001618">
    <property type="protein sequence ID" value="ACQ81389.1"/>
    <property type="molecule type" value="Genomic_DNA"/>
</dbReference>
<dbReference type="RefSeq" id="WP_015883629.1">
    <property type="nucleotide sequence ID" value="NC_012669.1"/>
</dbReference>
<dbReference type="SMR" id="C5C0J3"/>
<dbReference type="STRING" id="471853.Bcav_3145"/>
<dbReference type="KEGG" id="bcv:Bcav_3145"/>
<dbReference type="eggNOG" id="COG0050">
    <property type="taxonomic scope" value="Bacteria"/>
</dbReference>
<dbReference type="HOGENOM" id="CLU_007265_0_1_11"/>
<dbReference type="OrthoDB" id="9803139at2"/>
<dbReference type="Proteomes" id="UP000007962">
    <property type="component" value="Chromosome"/>
</dbReference>
<dbReference type="GO" id="GO:0005829">
    <property type="term" value="C:cytosol"/>
    <property type="evidence" value="ECO:0007669"/>
    <property type="project" value="TreeGrafter"/>
</dbReference>
<dbReference type="GO" id="GO:0005525">
    <property type="term" value="F:GTP binding"/>
    <property type="evidence" value="ECO:0007669"/>
    <property type="project" value="UniProtKB-UniRule"/>
</dbReference>
<dbReference type="GO" id="GO:0003924">
    <property type="term" value="F:GTPase activity"/>
    <property type="evidence" value="ECO:0007669"/>
    <property type="project" value="InterPro"/>
</dbReference>
<dbReference type="GO" id="GO:0003746">
    <property type="term" value="F:translation elongation factor activity"/>
    <property type="evidence" value="ECO:0007669"/>
    <property type="project" value="UniProtKB-UniRule"/>
</dbReference>
<dbReference type="CDD" id="cd01884">
    <property type="entry name" value="EF_Tu"/>
    <property type="match status" value="1"/>
</dbReference>
<dbReference type="CDD" id="cd03697">
    <property type="entry name" value="EFTU_II"/>
    <property type="match status" value="1"/>
</dbReference>
<dbReference type="CDD" id="cd03707">
    <property type="entry name" value="EFTU_III"/>
    <property type="match status" value="1"/>
</dbReference>
<dbReference type="FunFam" id="2.40.30.10:FF:000001">
    <property type="entry name" value="Elongation factor Tu"/>
    <property type="match status" value="1"/>
</dbReference>
<dbReference type="FunFam" id="3.40.50.300:FF:000003">
    <property type="entry name" value="Elongation factor Tu"/>
    <property type="match status" value="1"/>
</dbReference>
<dbReference type="Gene3D" id="3.40.50.300">
    <property type="entry name" value="P-loop containing nucleotide triphosphate hydrolases"/>
    <property type="match status" value="1"/>
</dbReference>
<dbReference type="Gene3D" id="2.40.30.10">
    <property type="entry name" value="Translation factors"/>
    <property type="match status" value="2"/>
</dbReference>
<dbReference type="HAMAP" id="MF_00118_B">
    <property type="entry name" value="EF_Tu_B"/>
    <property type="match status" value="1"/>
</dbReference>
<dbReference type="InterPro" id="IPR041709">
    <property type="entry name" value="EF-Tu_GTP-bd"/>
</dbReference>
<dbReference type="InterPro" id="IPR050055">
    <property type="entry name" value="EF-Tu_GTPase"/>
</dbReference>
<dbReference type="InterPro" id="IPR004161">
    <property type="entry name" value="EFTu-like_2"/>
</dbReference>
<dbReference type="InterPro" id="IPR033720">
    <property type="entry name" value="EFTU_2"/>
</dbReference>
<dbReference type="InterPro" id="IPR031157">
    <property type="entry name" value="G_TR_CS"/>
</dbReference>
<dbReference type="InterPro" id="IPR027417">
    <property type="entry name" value="P-loop_NTPase"/>
</dbReference>
<dbReference type="InterPro" id="IPR005225">
    <property type="entry name" value="Small_GTP-bd"/>
</dbReference>
<dbReference type="InterPro" id="IPR000795">
    <property type="entry name" value="T_Tr_GTP-bd_dom"/>
</dbReference>
<dbReference type="InterPro" id="IPR009000">
    <property type="entry name" value="Transl_B-barrel_sf"/>
</dbReference>
<dbReference type="InterPro" id="IPR009001">
    <property type="entry name" value="Transl_elong_EF1A/Init_IF2_C"/>
</dbReference>
<dbReference type="InterPro" id="IPR004541">
    <property type="entry name" value="Transl_elong_EFTu/EF1A_bac/org"/>
</dbReference>
<dbReference type="InterPro" id="IPR004160">
    <property type="entry name" value="Transl_elong_EFTu/EF1A_C"/>
</dbReference>
<dbReference type="NCBIfam" id="TIGR00485">
    <property type="entry name" value="EF-Tu"/>
    <property type="match status" value="1"/>
</dbReference>
<dbReference type="NCBIfam" id="NF000766">
    <property type="entry name" value="PRK00049.1"/>
    <property type="match status" value="1"/>
</dbReference>
<dbReference type="NCBIfam" id="NF009372">
    <property type="entry name" value="PRK12735.1"/>
    <property type="match status" value="1"/>
</dbReference>
<dbReference type="NCBIfam" id="NF009373">
    <property type="entry name" value="PRK12736.1"/>
    <property type="match status" value="1"/>
</dbReference>
<dbReference type="NCBIfam" id="TIGR00231">
    <property type="entry name" value="small_GTP"/>
    <property type="match status" value="1"/>
</dbReference>
<dbReference type="PANTHER" id="PTHR43721:SF22">
    <property type="entry name" value="ELONGATION FACTOR TU, MITOCHONDRIAL"/>
    <property type="match status" value="1"/>
</dbReference>
<dbReference type="PANTHER" id="PTHR43721">
    <property type="entry name" value="ELONGATION FACTOR TU-RELATED"/>
    <property type="match status" value="1"/>
</dbReference>
<dbReference type="Pfam" id="PF00009">
    <property type="entry name" value="GTP_EFTU"/>
    <property type="match status" value="1"/>
</dbReference>
<dbReference type="Pfam" id="PF03144">
    <property type="entry name" value="GTP_EFTU_D2"/>
    <property type="match status" value="1"/>
</dbReference>
<dbReference type="Pfam" id="PF03143">
    <property type="entry name" value="GTP_EFTU_D3"/>
    <property type="match status" value="1"/>
</dbReference>
<dbReference type="PRINTS" id="PR00315">
    <property type="entry name" value="ELONGATNFCT"/>
</dbReference>
<dbReference type="SUPFAM" id="SSF50465">
    <property type="entry name" value="EF-Tu/eEF-1alpha/eIF2-gamma C-terminal domain"/>
    <property type="match status" value="1"/>
</dbReference>
<dbReference type="SUPFAM" id="SSF52540">
    <property type="entry name" value="P-loop containing nucleoside triphosphate hydrolases"/>
    <property type="match status" value="1"/>
</dbReference>
<dbReference type="SUPFAM" id="SSF50447">
    <property type="entry name" value="Translation proteins"/>
    <property type="match status" value="1"/>
</dbReference>
<dbReference type="PROSITE" id="PS00301">
    <property type="entry name" value="G_TR_1"/>
    <property type="match status" value="1"/>
</dbReference>
<dbReference type="PROSITE" id="PS51722">
    <property type="entry name" value="G_TR_2"/>
    <property type="match status" value="1"/>
</dbReference>
<comment type="function">
    <text evidence="2">GTP hydrolase that promotes the GTP-dependent binding of aminoacyl-tRNA to the A-site of ribosomes during protein biosynthesis.</text>
</comment>
<comment type="catalytic activity">
    <reaction evidence="2">
        <text>GTP + H2O = GDP + phosphate + H(+)</text>
        <dbReference type="Rhea" id="RHEA:19669"/>
        <dbReference type="ChEBI" id="CHEBI:15377"/>
        <dbReference type="ChEBI" id="CHEBI:15378"/>
        <dbReference type="ChEBI" id="CHEBI:37565"/>
        <dbReference type="ChEBI" id="CHEBI:43474"/>
        <dbReference type="ChEBI" id="CHEBI:58189"/>
        <dbReference type="EC" id="3.6.5.3"/>
    </reaction>
    <physiologicalReaction direction="left-to-right" evidence="2">
        <dbReference type="Rhea" id="RHEA:19670"/>
    </physiologicalReaction>
</comment>
<comment type="subunit">
    <text evidence="2">Monomer.</text>
</comment>
<comment type="subcellular location">
    <subcellularLocation>
        <location evidence="2">Cytoplasm</location>
    </subcellularLocation>
</comment>
<comment type="similarity">
    <text evidence="2">Belongs to the TRAFAC class translation factor GTPase superfamily. Classic translation factor GTPase family. EF-Tu/EF-1A subfamily.</text>
</comment>
<accession>C5C0J3</accession>